<dbReference type="EMBL" id="J03399">
    <property type="protein sequence ID" value="AAB59808.1"/>
    <property type="molecule type" value="Genomic_DNA"/>
</dbReference>
<dbReference type="EMBL" id="AY243312">
    <property type="protein sequence ID" value="AAO89354.1"/>
    <property type="molecule type" value="Genomic_DNA"/>
</dbReference>
<dbReference type="PIR" id="F29889">
    <property type="entry name" value="WZVZI6"/>
</dbReference>
<dbReference type="RefSeq" id="YP_232957.1">
    <property type="nucleotide sequence ID" value="NC_006998.1"/>
</dbReference>
<dbReference type="DNASU" id="3707608"/>
<dbReference type="GeneID" id="3707608"/>
<dbReference type="KEGG" id="vg:3707608"/>
<dbReference type="Proteomes" id="UP000000344">
    <property type="component" value="Genome"/>
</dbReference>
<dbReference type="GO" id="GO:0044423">
    <property type="term" value="C:virion component"/>
    <property type="evidence" value="ECO:0007669"/>
    <property type="project" value="UniProtKB-KW"/>
</dbReference>
<dbReference type="GO" id="GO:0003677">
    <property type="term" value="F:DNA binding"/>
    <property type="evidence" value="ECO:0007669"/>
    <property type="project" value="UniProtKB-KW"/>
</dbReference>
<dbReference type="GO" id="GO:0016032">
    <property type="term" value="P:viral process"/>
    <property type="evidence" value="ECO:0007669"/>
    <property type="project" value="InterPro"/>
</dbReference>
<dbReference type="InterPro" id="IPR007674">
    <property type="entry name" value="Poxvirus_F5/I6_dom"/>
</dbReference>
<dbReference type="InterPro" id="IPR022219">
    <property type="entry name" value="Poxvirus_I6_C"/>
</dbReference>
<dbReference type="Pfam" id="PF04595">
    <property type="entry name" value="Pox_I6"/>
    <property type="match status" value="1"/>
</dbReference>
<dbReference type="Pfam" id="PF12562">
    <property type="entry name" value="Pox_I6_C"/>
    <property type="match status" value="1"/>
</dbReference>
<organismHost>
    <name type="scientific">Bos taurus</name>
    <name type="common">Bovine</name>
    <dbReference type="NCBI Taxonomy" id="9913"/>
</organismHost>
<organism>
    <name type="scientific">Vaccinia virus (strain Western Reserve)</name>
    <name type="common">VACV</name>
    <name type="synonym">Vaccinia virus (strain WR)</name>
    <dbReference type="NCBI Taxonomy" id="10254"/>
    <lineage>
        <taxon>Viruses</taxon>
        <taxon>Varidnaviria</taxon>
        <taxon>Bamfordvirae</taxon>
        <taxon>Nucleocytoviricota</taxon>
        <taxon>Pokkesviricetes</taxon>
        <taxon>Chitovirales</taxon>
        <taxon>Poxviridae</taxon>
        <taxon>Chordopoxvirinae</taxon>
        <taxon>Orthopoxvirus</taxon>
        <taxon>Vaccinia virus</taxon>
    </lineage>
</organism>
<sequence>MNNFVKQVASKSLKPTKKLSPSDEVISLNECIISFNLDNFYYCNDGLFTKPINTPEDVLKSLLIMESFAYEKMIIKGLIKILISRAYINDIYFTPFGWLTGVDDDPETHVVIKIIFNSSLISIKSQVIEYLKPYNVNNLSVLTTEKELSINTFNVPDSIPMSIISFFPFDTDFILVILFFGVYNDSYCGISYISPKERLPYIIEILKPLVSEINMLSDEIGRTSSIRIFNSTSVKKFPTNTLTSICEIVYSFDESSFPTPKTFTPLNASPYIPKKIVSLLDLPSNVEIKAISRGGVDFITHINNKRLNTILVIAKDNFLKNSTFSGTFIKENIIWKGIYTYRIIKSSFPVPTIKSVTNKKKICKKHCFVNSQYTTRTLSHIL</sequence>
<feature type="chain" id="PRO_0000099579" description="Telomere-binding protein OPG082">
    <location>
        <begin position="1"/>
        <end position="382"/>
    </location>
</feature>
<feature type="mutagenesis site" description="Reduced plaque size at 32 degrees Celsius." evidence="2">
    <original>KPTKK</original>
    <variation>APTAA</variation>
    <location>
        <begin position="14"/>
        <end position="18"/>
    </location>
</feature>
<feature type="mutagenesis site" description="Reduced plaque size at 32 degrees Celsius." evidence="2">
    <original>EDVLK</original>
    <variation>AAVLA</variation>
    <location>
        <begin position="56"/>
        <end position="60"/>
    </location>
</feature>
<feature type="mutagenesis site" description="No change in amounts of infectious virus produced during a single round of infection at 32 degrees Celsius or 40 degrees Celsius." evidence="2">
    <original>DDD</original>
    <variation>AAA</variation>
    <location>
        <begin position="103"/>
        <end position="105"/>
    </location>
</feature>
<feature type="mutagenesis site" description="No change in amounts of infectious virus produced during a single round of infection at 32 degrees Celsius or 40 degrees Celsius." evidence="2">
    <original>EKE</original>
    <variation>AAA</variation>
    <location>
        <begin position="145"/>
        <end position="147"/>
    </location>
</feature>
<feature type="mutagenesis site" description="No change in amounts of infectious virus produced during a single round of infection at 32 degrees Celsius or 40 degrees Celsius." evidence="2">
    <original>KER</original>
    <variation>AAA</variation>
    <location>
        <begin position="196"/>
        <end position="198"/>
    </location>
</feature>
<feature type="mutagenesis site" description="No change in amounts of infectious virus produced during a single round of infection at 32 degrees Celsius or 40 degrees Celsius." evidence="2">
    <original>KR</original>
    <variation>AA</variation>
    <location>
        <begin position="305"/>
        <end position="306"/>
    </location>
</feature>
<feature type="mutagenesis site" description="100-fold reduction in viral yield at 40 degrees Celsius. Failure in genome encapsidation at 40 degrees Celsius." evidence="2">
    <original>KKK</original>
    <variation>AAA</variation>
    <location>
        <begin position="359"/>
        <end position="361"/>
    </location>
</feature>
<feature type="mutagenesis site" description="Reduced plaque size at 32 degrees Celsius." evidence="2">
    <original>KK</original>
    <variation>AA</variation>
    <location>
        <begin position="364"/>
        <end position="365"/>
    </location>
</feature>
<protein>
    <recommendedName>
        <fullName>Telomere-binding protein OPG082</fullName>
    </recommendedName>
    <alternativeName>
        <fullName>Telomere-binding protein I6</fullName>
    </alternativeName>
</protein>
<gene>
    <name type="primary">OPG082</name>
    <name type="ordered locus">VACWR075</name>
    <name type="ORF">I6L</name>
</gene>
<comment type="function">
    <text evidence="1 2">Binds to the hairpin form of the viral telomeric sequence. Might direct genome encapsidation into the virus particle.</text>
</comment>
<comment type="subcellular location">
    <subcellularLocation>
        <location>Virion</location>
    </subcellularLocation>
    <text>Present in the virus core.</text>
</comment>
<comment type="induction">
    <text evidence="3">Expressed in the intermediate phase of the viral replicative cycle.</text>
</comment>
<comment type="similarity">
    <text evidence="4">Belongs to the orthopoxvirus OPG082 family.</text>
</comment>
<evidence type="ECO:0000269" key="1">
    <source>
    </source>
</evidence>
<evidence type="ECO:0000269" key="2">
    <source>
    </source>
</evidence>
<evidence type="ECO:0000269" key="3">
    <source>
    </source>
</evidence>
<evidence type="ECO:0000305" key="4"/>
<keyword id="KW-0903">Direct protein sequencing</keyword>
<keyword id="KW-0238">DNA-binding</keyword>
<keyword id="KW-1185">Reference proteome</keyword>
<keyword id="KW-0946">Virion</keyword>
<accession>P68462</accession>
<accession>P12925</accession>
<accession>Q76ZU7</accession>
<name>PG082_VACCW</name>
<proteinExistence type="evidence at protein level"/>
<reference key="1">
    <citation type="journal article" date="1988" name="J. Virol.">
        <title>Sequence and transcriptional analysis of the vaccinia virus HindIII I fragment.</title>
        <authorList>
            <person name="Schmitt J.F.C."/>
            <person name="Stunnenberg H.G."/>
        </authorList>
    </citation>
    <scope>NUCLEOTIDE SEQUENCE [GENOMIC DNA]</scope>
</reference>
<reference key="2">
    <citation type="submission" date="2003-02" db="EMBL/GenBank/DDBJ databases">
        <title>Sequencing of the coding region of Vaccinia-WR to an average 9-fold redundancy and an error rate of 0.16/10kb.</title>
        <authorList>
            <person name="Esposito J.J."/>
            <person name="Frace A.M."/>
            <person name="Sammons S.A."/>
            <person name="Olsen-Rasmussen M."/>
            <person name="Osborne J."/>
            <person name="Wohlhueter R."/>
        </authorList>
    </citation>
    <scope>NUCLEOTIDE SEQUENCE [LARGE SCALE GENOMIC DNA]</scope>
</reference>
<reference key="3">
    <citation type="journal article" date="2001" name="J. Virol.">
        <title>Vaccinia virus telomeres: interaction with the viral I1, I6, and K4 proteins.</title>
        <authorList>
            <person name="DeMasi J."/>
            <person name="Du S."/>
            <person name="Lennon D."/>
            <person name="Traktman P."/>
        </authorList>
    </citation>
    <scope>PROTEIN SEQUENCE OF 115-124; 262-274 AND 276-289</scope>
    <scope>FUNCTION</scope>
</reference>
<reference key="4">
    <citation type="journal article" date="2003" name="J. Virol.">
        <title>Genetic analysis of the vaccinia virus I6 telomere-binding protein uncovers a key role in genome encapsidation.</title>
        <authorList>
            <person name="Grubisha O."/>
            <person name="Traktman P."/>
        </authorList>
    </citation>
    <scope>FUNCTION</scope>
    <scope>MUTAGENESIS OF 14-LYS--LYS-18; 56-GLU--LYS-60; 103-ASP--ASP-105; 145-GLU--GLU-147; 196-LYS--ARG-198; 305-LYS-ARG-306; 359-LYS--LYS-361 AND 364-LYS-LYS-365</scope>
</reference>
<reference key="5">
    <citation type="journal article" date="2015" name="J. Virol.">
        <title>Deciphering poxvirus gene expression by RNA sequencing and ribosome profiling.</title>
        <authorList>
            <person name="Yang Z."/>
            <person name="Cao S."/>
            <person name="Martens C.A."/>
            <person name="Porcella S.F."/>
            <person name="Xie Z."/>
            <person name="Ma M."/>
            <person name="Shen B."/>
            <person name="Moss B."/>
        </authorList>
    </citation>
    <scope>INDUCTION</scope>
</reference>